<evidence type="ECO:0000250" key="1"/>
<evidence type="ECO:0000255" key="2">
    <source>
        <dbReference type="PROSITE-ProRule" id="PRU01346"/>
    </source>
</evidence>
<evidence type="ECO:0000305" key="3"/>
<organism>
    <name type="scientific">Xenopus laevis</name>
    <name type="common">African clawed frog</name>
    <dbReference type="NCBI Taxonomy" id="8355"/>
    <lineage>
        <taxon>Eukaryota</taxon>
        <taxon>Metazoa</taxon>
        <taxon>Chordata</taxon>
        <taxon>Craniata</taxon>
        <taxon>Vertebrata</taxon>
        <taxon>Euteleostomi</taxon>
        <taxon>Amphibia</taxon>
        <taxon>Batrachia</taxon>
        <taxon>Anura</taxon>
        <taxon>Pipoidea</taxon>
        <taxon>Pipidae</taxon>
        <taxon>Xenopodinae</taxon>
        <taxon>Xenopus</taxon>
        <taxon>Xenopus</taxon>
    </lineage>
</organism>
<proteinExistence type="inferred from homology"/>
<name>LMD1B_XENLA</name>
<reference key="1">
    <citation type="submission" date="2004-04" db="EMBL/GenBank/DDBJ databases">
        <authorList>
            <consortium name="NIH - Xenopus Gene Collection (XGC) project"/>
        </authorList>
    </citation>
    <scope>NUCLEOTIDE SEQUENCE [LARGE SCALE MRNA]</scope>
    <source>
        <tissue>Ovary</tissue>
    </source>
</reference>
<gene>
    <name type="primary">naa38-b</name>
    <name type="synonym">lsmd1-b</name>
</gene>
<comment type="function">
    <text evidence="1">Auxillary component of the N-terminal acetyltransferase C (NatC) complex which catalyzes acetylation of N-terminal methionine residues.</text>
</comment>
<comment type="subunit">
    <text evidence="1">Component of the N-terminal acetyltransferase C (NatC) complex, which is composed of naa35, naa38 and naa30.</text>
</comment>
<comment type="subcellular location">
    <subcellularLocation>
        <location evidence="1">Cytoplasm</location>
    </subcellularLocation>
</comment>
<comment type="similarity">
    <text evidence="3">Belongs to the snRNP Sm proteins family.</text>
</comment>
<keyword id="KW-0963">Cytoplasm</keyword>
<keyword id="KW-1185">Reference proteome</keyword>
<sequence>MASVLEENGYITESCPRTADSDVESGDTARHKLESLLNRNMRIQMTDGRSLIGCFLCTDRDCNVILGSAQEFLRPSDSFRIREPRVLGLAMVPGHHIVSIQVELETSPQYI</sequence>
<feature type="chain" id="PRO_0000299159" description="N-alpha-acetyltransferase 38-B, NatC auxiliary subunit">
    <location>
        <begin position="1"/>
        <end position="111"/>
    </location>
</feature>
<feature type="domain" description="Sm" evidence="2">
    <location>
        <begin position="28"/>
        <end position="106"/>
    </location>
</feature>
<accession>Q6NU60</accession>
<protein>
    <recommendedName>
        <fullName>N-alpha-acetyltransferase 38-B, NatC auxiliary subunit</fullName>
    </recommendedName>
    <alternativeName>
        <fullName>LSM domain-containing protein 1-B</fullName>
    </alternativeName>
</protein>
<dbReference type="EMBL" id="BC068740">
    <property type="protein sequence ID" value="AAH68740.1"/>
    <property type="molecule type" value="mRNA"/>
</dbReference>
<dbReference type="RefSeq" id="NP_001084541.1">
    <property type="nucleotide sequence ID" value="NM_001091072.1"/>
</dbReference>
<dbReference type="SMR" id="Q6NU60"/>
<dbReference type="DNASU" id="414488"/>
<dbReference type="GeneID" id="414488"/>
<dbReference type="KEGG" id="xla:414488"/>
<dbReference type="AGR" id="Xenbase:XB-GENE-6252835"/>
<dbReference type="CTD" id="414488"/>
<dbReference type="Xenbase" id="XB-GENE-6252835">
    <property type="gene designation" value="naa38.S"/>
</dbReference>
<dbReference type="OrthoDB" id="368909at2759"/>
<dbReference type="Proteomes" id="UP000186698">
    <property type="component" value="Chromosome 3S"/>
</dbReference>
<dbReference type="Bgee" id="414488">
    <property type="expression patterns" value="Expressed in oocyte and 19 other cell types or tissues"/>
</dbReference>
<dbReference type="GO" id="GO:0005737">
    <property type="term" value="C:cytoplasm"/>
    <property type="evidence" value="ECO:0000250"/>
    <property type="project" value="UniProtKB"/>
</dbReference>
<dbReference type="GO" id="GO:0031417">
    <property type="term" value="C:NatC complex"/>
    <property type="evidence" value="ECO:0000250"/>
    <property type="project" value="UniProtKB"/>
</dbReference>
<dbReference type="GO" id="GO:0005634">
    <property type="term" value="C:nucleus"/>
    <property type="evidence" value="ECO:0000250"/>
    <property type="project" value="UniProtKB"/>
</dbReference>
<dbReference type="GO" id="GO:0003723">
    <property type="term" value="F:RNA binding"/>
    <property type="evidence" value="ECO:0007669"/>
    <property type="project" value="InterPro"/>
</dbReference>
<dbReference type="GO" id="GO:0043066">
    <property type="term" value="P:negative regulation of apoptotic process"/>
    <property type="evidence" value="ECO:0000250"/>
    <property type="project" value="UniProtKB"/>
</dbReference>
<dbReference type="CDD" id="cd06168">
    <property type="entry name" value="LSMD1"/>
    <property type="match status" value="1"/>
</dbReference>
<dbReference type="FunFam" id="2.30.30.100:FF:000028">
    <property type="entry name" value="N-alpha-acetyltransferase 38, NatC auxiliary subunit"/>
    <property type="match status" value="1"/>
</dbReference>
<dbReference type="Gene3D" id="2.30.30.100">
    <property type="match status" value="1"/>
</dbReference>
<dbReference type="InterPro" id="IPR010920">
    <property type="entry name" value="LSM_dom_sf"/>
</dbReference>
<dbReference type="InterPro" id="IPR034110">
    <property type="entry name" value="LSMD1_Sm"/>
</dbReference>
<dbReference type="InterPro" id="IPR047575">
    <property type="entry name" value="Sm"/>
</dbReference>
<dbReference type="InterPro" id="IPR001163">
    <property type="entry name" value="Sm_dom_euk/arc"/>
</dbReference>
<dbReference type="InterPro" id="IPR050914">
    <property type="entry name" value="snRNP_SmB/NAA38-like"/>
</dbReference>
<dbReference type="PANTHER" id="PTHR10701:SF5">
    <property type="entry name" value="N-ALPHA-ACETYLTRANSFERASE 38, NATC AUXILIARY SUBUNIT"/>
    <property type="match status" value="1"/>
</dbReference>
<dbReference type="PANTHER" id="PTHR10701">
    <property type="entry name" value="SMALL NUCLEAR RIBONUCLEOPROTEIN-ASSOCIATED PROTEIN B AND N"/>
    <property type="match status" value="1"/>
</dbReference>
<dbReference type="Pfam" id="PF01423">
    <property type="entry name" value="LSM"/>
    <property type="match status" value="1"/>
</dbReference>
<dbReference type="SMART" id="SM00651">
    <property type="entry name" value="Sm"/>
    <property type="match status" value="1"/>
</dbReference>
<dbReference type="SUPFAM" id="SSF50182">
    <property type="entry name" value="Sm-like ribonucleoproteins"/>
    <property type="match status" value="1"/>
</dbReference>
<dbReference type="PROSITE" id="PS52002">
    <property type="entry name" value="SM"/>
    <property type="match status" value="1"/>
</dbReference>